<accession>Q57812</accession>
<protein>
    <recommendedName>
        <fullName>Uncharacterized protein MJ0366</fullName>
    </recommendedName>
</protein>
<sequence length="92" mass="10854">MPLVGFMKEKKRATFYLYKNIDGRKLRYLLHKLENVENVDIDTLRRAIEAEKKYKRSITLTEEEEVIIQRLGKSANLLLNCELVKLDEGERA</sequence>
<name>Y366_METJA</name>
<feature type="chain" id="PRO_0000106835" description="Uncharacterized protein MJ0366">
    <location>
        <begin position="1"/>
        <end position="92"/>
    </location>
</feature>
<feature type="strand" evidence="1">
    <location>
        <begin position="12"/>
        <end position="19"/>
    </location>
</feature>
<feature type="helix" evidence="1">
    <location>
        <begin position="23"/>
        <end position="32"/>
    </location>
</feature>
<feature type="helix" evidence="1">
    <location>
        <begin position="33"/>
        <end position="35"/>
    </location>
</feature>
<feature type="helix" evidence="1">
    <location>
        <begin position="41"/>
        <end position="49"/>
    </location>
</feature>
<feature type="strand" evidence="1">
    <location>
        <begin position="54"/>
        <end position="59"/>
    </location>
</feature>
<feature type="helix" evidence="1">
    <location>
        <begin position="62"/>
        <end position="71"/>
    </location>
</feature>
<feature type="helix" evidence="1">
    <location>
        <begin position="72"/>
        <end position="74"/>
    </location>
</feature>
<feature type="helix" evidence="1">
    <location>
        <begin position="75"/>
        <end position="86"/>
    </location>
</feature>
<keyword id="KW-0002">3D-structure</keyword>
<keyword id="KW-1185">Reference proteome</keyword>
<evidence type="ECO:0007829" key="1">
    <source>
        <dbReference type="PDB" id="2EFV"/>
    </source>
</evidence>
<reference key="1">
    <citation type="journal article" date="1996" name="Science">
        <title>Complete genome sequence of the methanogenic archaeon, Methanococcus jannaschii.</title>
        <authorList>
            <person name="Bult C.J."/>
            <person name="White O."/>
            <person name="Olsen G.J."/>
            <person name="Zhou L."/>
            <person name="Fleischmann R.D."/>
            <person name="Sutton G.G."/>
            <person name="Blake J.A."/>
            <person name="FitzGerald L.M."/>
            <person name="Clayton R.A."/>
            <person name="Gocayne J.D."/>
            <person name="Kerlavage A.R."/>
            <person name="Dougherty B.A."/>
            <person name="Tomb J.-F."/>
            <person name="Adams M.D."/>
            <person name="Reich C.I."/>
            <person name="Overbeek R."/>
            <person name="Kirkness E.F."/>
            <person name="Weinstock K.G."/>
            <person name="Merrick J.M."/>
            <person name="Glodek A."/>
            <person name="Scott J.L."/>
            <person name="Geoghagen N.S.M."/>
            <person name="Weidman J.F."/>
            <person name="Fuhrmann J.L."/>
            <person name="Nguyen D."/>
            <person name="Utterback T.R."/>
            <person name="Kelley J.M."/>
            <person name="Peterson J.D."/>
            <person name="Sadow P.W."/>
            <person name="Hanna M.C."/>
            <person name="Cotton M.D."/>
            <person name="Roberts K.M."/>
            <person name="Hurst M.A."/>
            <person name="Kaine B.P."/>
            <person name="Borodovsky M."/>
            <person name="Klenk H.-P."/>
            <person name="Fraser C.M."/>
            <person name="Smith H.O."/>
            <person name="Woese C.R."/>
            <person name="Venter J.C."/>
        </authorList>
    </citation>
    <scope>NUCLEOTIDE SEQUENCE [LARGE SCALE GENOMIC DNA]</scope>
    <source>
        <strain>ATCC 43067 / DSM 2661 / JAL-1 / JCM 10045 / NBRC 100440</strain>
    </source>
</reference>
<proteinExistence type="evidence at protein level"/>
<gene>
    <name type="ordered locus">MJ0366</name>
</gene>
<organism>
    <name type="scientific">Methanocaldococcus jannaschii (strain ATCC 43067 / DSM 2661 / JAL-1 / JCM 10045 / NBRC 100440)</name>
    <name type="common">Methanococcus jannaschii</name>
    <dbReference type="NCBI Taxonomy" id="243232"/>
    <lineage>
        <taxon>Archaea</taxon>
        <taxon>Methanobacteriati</taxon>
        <taxon>Methanobacteriota</taxon>
        <taxon>Methanomada group</taxon>
        <taxon>Methanococci</taxon>
        <taxon>Methanococcales</taxon>
        <taxon>Methanocaldococcaceae</taxon>
        <taxon>Methanocaldococcus</taxon>
    </lineage>
</organism>
<dbReference type="EMBL" id="L77117">
    <property type="protein sequence ID" value="AAB98357.1"/>
    <property type="molecule type" value="Genomic_DNA"/>
</dbReference>
<dbReference type="PIR" id="F64345">
    <property type="entry name" value="F64345"/>
</dbReference>
<dbReference type="PDB" id="2EFV">
    <property type="method" value="X-ray"/>
    <property type="resolution" value="1.90 A"/>
    <property type="chains" value="A=1-92"/>
</dbReference>
<dbReference type="PDBsum" id="2EFV"/>
<dbReference type="BMRB" id="Q57812"/>
<dbReference type="SMR" id="Q57812"/>
<dbReference type="FunCoup" id="Q57812">
    <property type="interactions" value="10"/>
</dbReference>
<dbReference type="STRING" id="243232.MJ_0366"/>
<dbReference type="PaxDb" id="243232-MJ_0366"/>
<dbReference type="EnsemblBacteria" id="AAB98357">
    <property type="protein sequence ID" value="AAB98357"/>
    <property type="gene ID" value="MJ_0366"/>
</dbReference>
<dbReference type="KEGG" id="mja:MJ_0366"/>
<dbReference type="eggNOG" id="arCOG05030">
    <property type="taxonomic scope" value="Archaea"/>
</dbReference>
<dbReference type="HOGENOM" id="CLU_188099_0_0_2"/>
<dbReference type="InParanoid" id="Q57812"/>
<dbReference type="OrthoDB" id="59404at2157"/>
<dbReference type="PhylomeDB" id="Q57812"/>
<dbReference type="EvolutionaryTrace" id="Q57812"/>
<dbReference type="Proteomes" id="UP000000805">
    <property type="component" value="Chromosome"/>
</dbReference>
<dbReference type="GO" id="GO:0006355">
    <property type="term" value="P:regulation of DNA-templated transcription"/>
    <property type="evidence" value="ECO:0007669"/>
    <property type="project" value="InterPro"/>
</dbReference>
<dbReference type="Gene3D" id="3.30.70.3260">
    <property type="entry name" value="Uncharacterised protein PF10802, DUF2540"/>
    <property type="match status" value="1"/>
</dbReference>
<dbReference type="InterPro" id="IPR024254">
    <property type="entry name" value="MJ0366-like"/>
</dbReference>
<dbReference type="InterPro" id="IPR010985">
    <property type="entry name" value="Ribbon_hlx_hlx"/>
</dbReference>
<dbReference type="Pfam" id="PF10802">
    <property type="entry name" value="DUF2540"/>
    <property type="match status" value="1"/>
</dbReference>
<dbReference type="SUPFAM" id="SSF47598">
    <property type="entry name" value="Ribbon-helix-helix"/>
    <property type="match status" value="1"/>
</dbReference>